<dbReference type="EC" id="2.7.7.7"/>
<dbReference type="EC" id="3.1.11.-"/>
<dbReference type="EMBL" id="U94848">
    <property type="protein sequence ID" value="AAB96430.1"/>
    <property type="molecule type" value="Genomic_DNA"/>
</dbReference>
<dbReference type="EMBL" id="AY603355">
    <property type="protein sequence ID" value="AAT10454.1"/>
    <property type="molecule type" value="Genomic_DNA"/>
</dbReference>
<dbReference type="PIR" id="T30802">
    <property type="entry name" value="T30802"/>
</dbReference>
<dbReference type="SMR" id="O57191"/>
<dbReference type="Proteomes" id="UP000159908">
    <property type="component" value="Segment"/>
</dbReference>
<dbReference type="Proteomes" id="UP000172909">
    <property type="component" value="Segment"/>
</dbReference>
<dbReference type="GO" id="GO:0003677">
    <property type="term" value="F:DNA binding"/>
    <property type="evidence" value="ECO:0007669"/>
    <property type="project" value="UniProtKB-KW"/>
</dbReference>
<dbReference type="GO" id="GO:0003887">
    <property type="term" value="F:DNA-directed DNA polymerase activity"/>
    <property type="evidence" value="ECO:0007669"/>
    <property type="project" value="UniProtKB-KW"/>
</dbReference>
<dbReference type="GO" id="GO:0004527">
    <property type="term" value="F:exonuclease activity"/>
    <property type="evidence" value="ECO:0007669"/>
    <property type="project" value="UniProtKB-KW"/>
</dbReference>
<dbReference type="GO" id="GO:0000166">
    <property type="term" value="F:nucleotide binding"/>
    <property type="evidence" value="ECO:0007669"/>
    <property type="project" value="InterPro"/>
</dbReference>
<dbReference type="GO" id="GO:0006310">
    <property type="term" value="P:DNA recombination"/>
    <property type="evidence" value="ECO:0007669"/>
    <property type="project" value="UniProtKB-KW"/>
</dbReference>
<dbReference type="GO" id="GO:0006260">
    <property type="term" value="P:DNA replication"/>
    <property type="evidence" value="ECO:0007669"/>
    <property type="project" value="UniProtKB-KW"/>
</dbReference>
<dbReference type="GO" id="GO:0039693">
    <property type="term" value="P:viral DNA genome replication"/>
    <property type="evidence" value="ECO:0007669"/>
    <property type="project" value="UniProtKB-KW"/>
</dbReference>
<dbReference type="FunFam" id="1.10.287.690:FF:000010">
    <property type="entry name" value="DNA polymerase"/>
    <property type="match status" value="1"/>
</dbReference>
<dbReference type="Gene3D" id="1.10.287.690">
    <property type="entry name" value="Helix hairpin bin"/>
    <property type="match status" value="1"/>
</dbReference>
<dbReference type="Gene3D" id="3.90.1600.10">
    <property type="entry name" value="Palm domain of DNA polymerase"/>
    <property type="match status" value="2"/>
</dbReference>
<dbReference type="Gene3D" id="3.30.420.10">
    <property type="entry name" value="Ribonuclease H-like superfamily/Ribonuclease H"/>
    <property type="match status" value="1"/>
</dbReference>
<dbReference type="InterPro" id="IPR006172">
    <property type="entry name" value="DNA-dir_DNA_pol_B"/>
</dbReference>
<dbReference type="InterPro" id="IPR017964">
    <property type="entry name" value="DNA-dir_DNA_pol_B_CS"/>
</dbReference>
<dbReference type="InterPro" id="IPR006133">
    <property type="entry name" value="DNA-dir_DNA_pol_B_exonuc"/>
</dbReference>
<dbReference type="InterPro" id="IPR006134">
    <property type="entry name" value="DNA-dir_DNA_pol_B_multi_dom"/>
</dbReference>
<dbReference type="InterPro" id="IPR013617">
    <property type="entry name" value="DNA-dir_DNA_pol_B_vir_insert"/>
</dbReference>
<dbReference type="InterPro" id="IPR043502">
    <property type="entry name" value="DNA/RNA_pol_sf"/>
</dbReference>
<dbReference type="InterPro" id="IPR023211">
    <property type="entry name" value="DNA_pol_palm_dom_sf"/>
</dbReference>
<dbReference type="InterPro" id="IPR050240">
    <property type="entry name" value="DNA_pol_type-B"/>
</dbReference>
<dbReference type="InterPro" id="IPR013660">
    <property type="entry name" value="DNApol_B_exo_N"/>
</dbReference>
<dbReference type="InterPro" id="IPR012337">
    <property type="entry name" value="RNaseH-like_sf"/>
</dbReference>
<dbReference type="InterPro" id="IPR036397">
    <property type="entry name" value="RNaseH_sf"/>
</dbReference>
<dbReference type="PANTHER" id="PTHR10322">
    <property type="entry name" value="DNA POLYMERASE CATALYTIC SUBUNIT"/>
    <property type="match status" value="1"/>
</dbReference>
<dbReference type="PANTHER" id="PTHR10322:SF23">
    <property type="entry name" value="DNA POLYMERASE DELTA CATALYTIC SUBUNIT"/>
    <property type="match status" value="1"/>
</dbReference>
<dbReference type="Pfam" id="PF00136">
    <property type="entry name" value="DNA_pol_B"/>
    <property type="match status" value="1"/>
</dbReference>
<dbReference type="Pfam" id="PF08408">
    <property type="entry name" value="DNA_pol_B_3"/>
    <property type="match status" value="1"/>
</dbReference>
<dbReference type="Pfam" id="PF03104">
    <property type="entry name" value="DNA_pol_B_exo1"/>
    <property type="match status" value="1"/>
</dbReference>
<dbReference type="Pfam" id="PF08452">
    <property type="entry name" value="DNAP_B_exo_N"/>
    <property type="match status" value="1"/>
</dbReference>
<dbReference type="PRINTS" id="PR00106">
    <property type="entry name" value="DNAPOLB"/>
</dbReference>
<dbReference type="SMART" id="SM00486">
    <property type="entry name" value="POLBc"/>
    <property type="match status" value="1"/>
</dbReference>
<dbReference type="SUPFAM" id="SSF56672">
    <property type="entry name" value="DNA/RNA polymerases"/>
    <property type="match status" value="1"/>
</dbReference>
<dbReference type="SUPFAM" id="SSF53098">
    <property type="entry name" value="Ribonuclease H-like"/>
    <property type="match status" value="1"/>
</dbReference>
<dbReference type="PROSITE" id="PS00116">
    <property type="entry name" value="DNA_POLYMERASE_B"/>
    <property type="match status" value="1"/>
</dbReference>
<proteinExistence type="inferred from homology"/>
<organismHost>
    <name type="scientific">Homo sapiens</name>
    <name type="common">Human</name>
    <dbReference type="NCBI Taxonomy" id="9606"/>
</organismHost>
<organism>
    <name type="scientific">Vaccinia virus (strain Ankara)</name>
    <name type="common">VACV</name>
    <dbReference type="NCBI Taxonomy" id="126794"/>
    <lineage>
        <taxon>Viruses</taxon>
        <taxon>Varidnaviria</taxon>
        <taxon>Bamfordvirae</taxon>
        <taxon>Nucleocytoviricota</taxon>
        <taxon>Pokkesviricetes</taxon>
        <taxon>Chitovirales</taxon>
        <taxon>Poxviridae</taxon>
        <taxon>Chordopoxvirinae</taxon>
        <taxon>Orthopoxvirus</taxon>
        <taxon>Vaccinia virus</taxon>
    </lineage>
</organism>
<reference key="1">
    <citation type="journal article" date="1998" name="Virology">
        <title>The complete genomic sequence of the modified vaccinia Ankara strain: comparison with other orthopoxviruses.</title>
        <authorList>
            <person name="Antoine G."/>
            <person name="Scheiflinger F."/>
            <person name="Dorner F."/>
            <person name="Falkner F.G."/>
        </authorList>
    </citation>
    <scope>NUCLEOTIDE SEQUENCE [LARGE SCALE GENOMIC DNA]</scope>
</reference>
<reference key="2">
    <citation type="submission" date="2004-04" db="EMBL/GenBank/DDBJ databases">
        <authorList>
            <person name="Esposito J.J."/>
            <person name="Frace M."/>
            <person name="Sammons S.A."/>
            <person name="Olsen-Rasmussen M.S."/>
            <person name="Osborne J."/>
            <person name="Khristova M."/>
            <person name="Wohlhueter R.M."/>
        </authorList>
    </citation>
    <scope>NUCLEOTIDE SEQUENCE [LARGE SCALE GENOMIC DNA]</scope>
    <source>
        <strain>Isolate Acambis 3000</strain>
    </source>
</reference>
<protein>
    <recommendedName>
        <fullName>DNA polymerase</fullName>
        <ecNumber>2.7.7.7</ecNumber>
    </recommendedName>
    <domain>
        <recommendedName>
            <fullName>3'-5' exodeoxyribonuclease</fullName>
            <shortName>3'-5' exonuclease</shortName>
            <ecNumber>3.1.11.-</ecNumber>
        </recommendedName>
    </domain>
</protein>
<evidence type="ECO:0000250" key="1">
    <source>
        <dbReference type="UniProtKB" id="P06856"/>
    </source>
</evidence>
<evidence type="ECO:0000305" key="2"/>
<accession>O57191</accession>
<gene>
    <name type="primary">OPG071</name>
    <name type="synonym">POL</name>
    <name type="ordered locus">MVA056L</name>
    <name type="ordered locus">ACAM3000_MVA_056</name>
    <name type="ORF">E9L</name>
</gene>
<keyword id="KW-0233">DNA recombination</keyword>
<keyword id="KW-0235">DNA replication</keyword>
<keyword id="KW-0238">DNA-binding</keyword>
<keyword id="KW-0239">DNA-directed DNA polymerase</keyword>
<keyword id="KW-0244">Early protein</keyword>
<keyword id="KW-0269">Exonuclease</keyword>
<keyword id="KW-0378">Hydrolase</keyword>
<keyword id="KW-0511">Multifunctional enzyme</keyword>
<keyword id="KW-0540">Nuclease</keyword>
<keyword id="KW-0548">Nucleotidyltransferase</keyword>
<keyword id="KW-0808">Transferase</keyword>
<keyword id="KW-1194">Viral DNA replication</keyword>
<feature type="chain" id="PRO_0000046531" description="DNA polymerase">
    <location>
        <begin position="1"/>
        <end position="1006"/>
    </location>
</feature>
<sequence length="1006" mass="116877">MDVRCINWFESHGENRFLYLKSRCRNGETVFIRFPHYFYYVVTDEIYQSLSPPPFNARPLGKMRTIDIDETISYNLDIKDRKCSVADMWLIEEPKKRSIQNATMDEFLNISWFYISNGISPDGCYSLDEQYLTKINNGCYHCDDPRNCFAKKIPRFDIPRSYLFLDIECHFDKKFPSVFINPISHTSYCYIDLSGKRLLFTLINEEMLTEQEIQEAVDRGCLRIQSLMEMDYERELVLCSEIVLLRIAKQLLELTFDYVVTFNGHNFDLRYITNRLELLTGEKIIFRSPDKKEAVHLCIYERNQSSHKGVGGMANTTFHVNNNNGTIFFDLYSFIQKSEKLDSYKLDSISKNAFSCMGKVLNRGVREMTFIGDDTTDAKGKAAAFAKVLTTGNYVTVDEDIICKVIRKDIWENGFKVVLSCPTLPNDTYKLSFGKDDVDLAQMYKDYNLNIALDMARYCIHDACLCQYLWEYYGVETKTDAGASTYVLPQSMVFEYRASTVIKGPLLKLLLETKTILVRSETKQKFPYEGGKVFAPKQKMFSNNVLIFDYNSLYPNVCIFGNLSPETLVGVVVSTNRLEEEINNQLLLQKYPPPRYITVHCEPRLPNLISEIAIFDRSIEGTIPRLLRTFLAERARYKKMLKQATSSTEKAIYDSMQYTYKIVANSVYGLMGFRNSALYSYASAKSCTSIGRRMILYLESVLNGAELSNGMLRFANPLSNPFYMDDRDINPIVKTSLPIDYRFRFRSVYGDTDSVFTEIDSQDVDKSIEIAKELERLINNRVLFNNFKIEFEAVYKNLIMQSKKKYTTMKYSASSNSKSVPERINKGTSETRRDVSKFHKNMIKTYKTRLSEMLSEGRMNSNQVCIDILRSLETDLRSEFDSRSSPLELFMLSRMHHSNYKSADNPNMYLVTEYNKNNPETIELGERYYFAYICPANVPWTKKLVNIKTYETIIDRSFKLGSDQRIFYEVYFKRLTSEIVNLLDNKVLCISFFERMFGSKPTFYEA</sequence>
<name>DPOL_VACCA</name>
<comment type="function">
    <text evidence="1">Catalyzes DNA synthesis. Acquires processivity by associating with a heterodimeric processivity factor comprised of the viral OPG148 and OPG116 proteins, thereby forming the DNA polymerase holoenzyme. Displays 3'- to 5' exonuclease activity. Might participate in viral DNA recombination. Does not perform OPG116/D4synthesis across an abasic site.</text>
</comment>
<comment type="catalytic activity">
    <reaction evidence="1">
        <text>DNA(n) + a 2'-deoxyribonucleoside 5'-triphosphate = DNA(n+1) + diphosphate</text>
        <dbReference type="Rhea" id="RHEA:22508"/>
        <dbReference type="Rhea" id="RHEA-COMP:17339"/>
        <dbReference type="Rhea" id="RHEA-COMP:17340"/>
        <dbReference type="ChEBI" id="CHEBI:33019"/>
        <dbReference type="ChEBI" id="CHEBI:61560"/>
        <dbReference type="ChEBI" id="CHEBI:173112"/>
        <dbReference type="EC" id="2.7.7.7"/>
    </reaction>
</comment>
<comment type="subunit">
    <text evidence="1">Interacts with OPG148. Component of the Uracil-DNA glycosylase(UDG)-OPG148-polymerase complex; OPG148 and OPG116/UDG form a heterodimeric processivity factor that associates with OPG071 to form the processive polymerase holoenzyme.</text>
</comment>
<comment type="induction">
    <text evidence="1">Expressed in the early phase of the viral replicative cycle.</text>
</comment>
<comment type="similarity">
    <text evidence="2">Belongs to the DNA polymerase type-B family.</text>
</comment>